<reference key="1">
    <citation type="journal article" date="2001" name="Lancet">
        <title>Whole genome sequencing of meticillin-resistant Staphylococcus aureus.</title>
        <authorList>
            <person name="Kuroda M."/>
            <person name="Ohta T."/>
            <person name="Uchiyama I."/>
            <person name="Baba T."/>
            <person name="Yuzawa H."/>
            <person name="Kobayashi I."/>
            <person name="Cui L."/>
            <person name="Oguchi A."/>
            <person name="Aoki K."/>
            <person name="Nagai Y."/>
            <person name="Lian J.-Q."/>
            <person name="Ito T."/>
            <person name="Kanamori M."/>
            <person name="Matsumaru H."/>
            <person name="Maruyama A."/>
            <person name="Murakami H."/>
            <person name="Hosoyama A."/>
            <person name="Mizutani-Ui Y."/>
            <person name="Takahashi N.K."/>
            <person name="Sawano T."/>
            <person name="Inoue R."/>
            <person name="Kaito C."/>
            <person name="Sekimizu K."/>
            <person name="Hirakawa H."/>
            <person name="Kuhara S."/>
            <person name="Goto S."/>
            <person name="Yabuzaki J."/>
            <person name="Kanehisa M."/>
            <person name="Yamashita A."/>
            <person name="Oshima K."/>
            <person name="Furuya K."/>
            <person name="Yoshino C."/>
            <person name="Shiba T."/>
            <person name="Hattori M."/>
            <person name="Ogasawara N."/>
            <person name="Hayashi H."/>
            <person name="Hiramatsu K."/>
        </authorList>
    </citation>
    <scope>NUCLEOTIDE SEQUENCE [LARGE SCALE GENOMIC DNA]</scope>
    <source>
        <strain>N315</strain>
    </source>
</reference>
<reference key="2">
    <citation type="journal article" date="2005" name="J. Microbiol. Methods">
        <title>Correlation of proteomic and transcriptomic profiles of Staphylococcus aureus during the post-exponential phase of growth.</title>
        <authorList>
            <person name="Scherl A."/>
            <person name="Francois P."/>
            <person name="Bento M."/>
            <person name="Deshusses J.M."/>
            <person name="Charbonnier Y."/>
            <person name="Converset V."/>
            <person name="Huyghe A."/>
            <person name="Walter N."/>
            <person name="Hoogland C."/>
            <person name="Appel R.D."/>
            <person name="Sanchez J.-C."/>
            <person name="Zimmermann-Ivol C.G."/>
            <person name="Corthals G.L."/>
            <person name="Hochstrasser D.F."/>
            <person name="Schrenzel J."/>
        </authorList>
    </citation>
    <scope>IDENTIFICATION BY MASS SPECTROMETRY</scope>
    <source>
        <strain>N315</strain>
    </source>
</reference>
<reference key="3">
    <citation type="submission" date="2007-10" db="UniProtKB">
        <title>Shotgun proteomic analysis of total and membrane protein extracts of S. aureus strain N315.</title>
        <authorList>
            <person name="Vaezzadeh A.R."/>
            <person name="Deshusses J."/>
            <person name="Lescuyer P."/>
            <person name="Hochstrasser D.F."/>
        </authorList>
    </citation>
    <scope>IDENTIFICATION BY MASS SPECTROMETRY [LARGE SCALE ANALYSIS]</scope>
    <source>
        <strain>N315</strain>
    </source>
</reference>
<proteinExistence type="evidence at protein level"/>
<dbReference type="EC" id="6.2.1.54" evidence="1"/>
<dbReference type="EMBL" id="BA000018">
    <property type="protein sequence ID" value="BAB42032.1"/>
    <property type="molecule type" value="Genomic_DNA"/>
</dbReference>
<dbReference type="PIR" id="E89859">
    <property type="entry name" value="E89859"/>
</dbReference>
<dbReference type="RefSeq" id="WP_000129659.1">
    <property type="nucleotide sequence ID" value="NC_002745.2"/>
</dbReference>
<dbReference type="SMR" id="P99107"/>
<dbReference type="EnsemblBacteria" id="BAB42032">
    <property type="protein sequence ID" value="BAB42032"/>
    <property type="gene ID" value="BAB42032"/>
</dbReference>
<dbReference type="KEGG" id="sau:SA0793"/>
<dbReference type="HOGENOM" id="CLU_000022_2_12_9"/>
<dbReference type="UniPathway" id="UPA00556"/>
<dbReference type="GO" id="GO:0005737">
    <property type="term" value="C:cytoplasm"/>
    <property type="evidence" value="ECO:0007669"/>
    <property type="project" value="UniProtKB-SubCell"/>
</dbReference>
<dbReference type="GO" id="GO:0005524">
    <property type="term" value="F:ATP binding"/>
    <property type="evidence" value="ECO:0007669"/>
    <property type="project" value="UniProtKB-KW"/>
</dbReference>
<dbReference type="GO" id="GO:0047473">
    <property type="term" value="F:D-alanine [D-alanyl carrier protein] ligase activity"/>
    <property type="evidence" value="ECO:0007669"/>
    <property type="project" value="UniProtKB-UniRule"/>
</dbReference>
<dbReference type="GO" id="GO:0070395">
    <property type="term" value="P:lipoteichoic acid biosynthetic process"/>
    <property type="evidence" value="ECO:0007669"/>
    <property type="project" value="UniProtKB-UniRule"/>
</dbReference>
<dbReference type="CDD" id="cd05945">
    <property type="entry name" value="DltA"/>
    <property type="match status" value="1"/>
</dbReference>
<dbReference type="FunFam" id="3.30.300.30:FF:000012">
    <property type="entry name" value="D-alanine--D-alanyl carrier protein ligase"/>
    <property type="match status" value="1"/>
</dbReference>
<dbReference type="Gene3D" id="3.30.300.30">
    <property type="match status" value="1"/>
</dbReference>
<dbReference type="Gene3D" id="3.40.50.12780">
    <property type="entry name" value="N-terminal domain of ligase-like"/>
    <property type="match status" value="1"/>
</dbReference>
<dbReference type="HAMAP" id="MF_00593">
    <property type="entry name" value="DltA"/>
    <property type="match status" value="1"/>
</dbReference>
<dbReference type="InterPro" id="IPR010071">
    <property type="entry name" value="AA_adenyl_dom"/>
</dbReference>
<dbReference type="InterPro" id="IPR025110">
    <property type="entry name" value="AMP-bd_C"/>
</dbReference>
<dbReference type="InterPro" id="IPR045851">
    <property type="entry name" value="AMP-bd_C_sf"/>
</dbReference>
<dbReference type="InterPro" id="IPR000873">
    <property type="entry name" value="AMP-dep_synth/lig_dom"/>
</dbReference>
<dbReference type="InterPro" id="IPR042099">
    <property type="entry name" value="ANL_N_sf"/>
</dbReference>
<dbReference type="InterPro" id="IPR010072">
    <property type="entry name" value="DltA"/>
</dbReference>
<dbReference type="InterPro" id="IPR044507">
    <property type="entry name" value="DltA-like"/>
</dbReference>
<dbReference type="NCBIfam" id="TIGR01733">
    <property type="entry name" value="AA-adenyl-dom"/>
    <property type="match status" value="1"/>
</dbReference>
<dbReference type="NCBIfam" id="TIGR01734">
    <property type="entry name" value="D-ala-DACP-lig"/>
    <property type="match status" value="1"/>
</dbReference>
<dbReference type="NCBIfam" id="NF003417">
    <property type="entry name" value="PRK04813.1"/>
    <property type="match status" value="1"/>
</dbReference>
<dbReference type="PANTHER" id="PTHR45398">
    <property type="match status" value="1"/>
</dbReference>
<dbReference type="PANTHER" id="PTHR45398:SF1">
    <property type="entry name" value="ENZYME, PUTATIVE (JCVI)-RELATED"/>
    <property type="match status" value="1"/>
</dbReference>
<dbReference type="Pfam" id="PF00501">
    <property type="entry name" value="AMP-binding"/>
    <property type="match status" value="1"/>
</dbReference>
<dbReference type="Pfam" id="PF13193">
    <property type="entry name" value="AMP-binding_C"/>
    <property type="match status" value="1"/>
</dbReference>
<dbReference type="SUPFAM" id="SSF56801">
    <property type="entry name" value="Acetyl-CoA synthetase-like"/>
    <property type="match status" value="1"/>
</dbReference>
<accession>P99107</accession>
<accession>Q53661</accession>
<name>DLTA_STAAN</name>
<protein>
    <recommendedName>
        <fullName evidence="1">D-alanine--D-alanyl carrier protein ligase</fullName>
        <shortName evidence="1">DCL</shortName>
        <ecNumber evidence="1">6.2.1.54</ecNumber>
    </recommendedName>
    <alternativeName>
        <fullName evidence="1">D-alanine--poly(phosphoribitol) ligase subunit 1</fullName>
    </alternativeName>
    <alternativeName>
        <fullName evidence="1">D-alanine-activating enzyme</fullName>
        <shortName evidence="1">DAE</shortName>
    </alternativeName>
</protein>
<sequence>MTDIINKLQAFADANPQSIAVRHTTDELTYQQLMDESSKLAHRLQGSKKPMILFGHMSPYMIVGMIGAIKAGCGYVPVDTSIPEDRIKMIINKVQPEFVFNTTDESFESLEGEVFTIEDIKTSQDPVIFDSQIKDNDTVYTIFTSGSTGEPKGVQIEYASLVQFTEWMLELNKSGNKQQWLNQAPFSFDLSVMAIYPCLASGGTLNLVDKNMINKPKLLNEMLTATPINIWVSTPSFMEMCLLLPTLNEEQYGSLNEFFFCGEILPHRAAKALVSRFPSATIYNTYGPTEATVAVTSIQITQEILDQYPTLPVGVERLGARLSTTDDGELVIEGQSVSLGYLKNDQKTAEVFNFDDGIRTYHTGDKAKFENGQWFIQGRIDFQIKLNGYRMELEEIETQLRQSEFVKEAIVVPVYKNDKVIHLIGAIVPTTEVTDNAEMTKNIKNDLKSRLPEYMIPRKFEWMEQLPLTSNGKIDRKKIAEVING</sequence>
<gene>
    <name evidence="1" type="primary">dltA</name>
    <name type="ordered locus">SA0793</name>
</gene>
<keyword id="KW-0067">ATP-binding</keyword>
<keyword id="KW-0963">Cytoplasm</keyword>
<keyword id="KW-0436">Ligase</keyword>
<keyword id="KW-0547">Nucleotide-binding</keyword>
<evidence type="ECO:0000255" key="1">
    <source>
        <dbReference type="HAMAP-Rule" id="MF_00593"/>
    </source>
</evidence>
<comment type="function">
    <text evidence="1">Catalyzes the first step in the D-alanylation of lipoteichoic acid (LTA), the activation of D-alanine and its transfer onto the D-alanyl carrier protein (Dcp) DltC. In an ATP-dependent two-step reaction, forms a high energy D-alanyl-AMP intermediate, followed by transfer of the D-alanyl residue as a thiol ester to the phosphopantheinyl prosthetic group of the Dcp. D-alanylation of LTA plays an important role in modulating the properties of the cell wall in Gram-positive bacteria, influencing the net charge of the cell wall.</text>
</comment>
<comment type="catalytic activity">
    <reaction evidence="1">
        <text>holo-[D-alanyl-carrier protein] + D-alanine + ATP = D-alanyl-[D-alanyl-carrier protein] + AMP + diphosphate</text>
        <dbReference type="Rhea" id="RHEA:55132"/>
        <dbReference type="Rhea" id="RHEA-COMP:14102"/>
        <dbReference type="Rhea" id="RHEA-COMP:14103"/>
        <dbReference type="ChEBI" id="CHEBI:30616"/>
        <dbReference type="ChEBI" id="CHEBI:33019"/>
        <dbReference type="ChEBI" id="CHEBI:57416"/>
        <dbReference type="ChEBI" id="CHEBI:64479"/>
        <dbReference type="ChEBI" id="CHEBI:138620"/>
        <dbReference type="ChEBI" id="CHEBI:456215"/>
        <dbReference type="EC" id="6.2.1.54"/>
    </reaction>
</comment>
<comment type="pathway">
    <text evidence="1">Cell wall biogenesis; lipoteichoic acid biosynthesis.</text>
</comment>
<comment type="subcellular location">
    <subcellularLocation>
        <location evidence="1">Cytoplasm</location>
    </subcellularLocation>
</comment>
<comment type="similarity">
    <text evidence="1">Belongs to the ATP-dependent AMP-binding enzyme family. DltA subfamily.</text>
</comment>
<organism>
    <name type="scientific">Staphylococcus aureus (strain N315)</name>
    <dbReference type="NCBI Taxonomy" id="158879"/>
    <lineage>
        <taxon>Bacteria</taxon>
        <taxon>Bacillati</taxon>
        <taxon>Bacillota</taxon>
        <taxon>Bacilli</taxon>
        <taxon>Bacillales</taxon>
        <taxon>Staphylococcaceae</taxon>
        <taxon>Staphylococcus</taxon>
    </lineage>
</organism>
<feature type="chain" id="PRO_0000213151" description="D-alanine--D-alanyl carrier protein ligase">
    <location>
        <begin position="1"/>
        <end position="485"/>
    </location>
</feature>
<feature type="binding site" evidence="1">
    <location>
        <begin position="144"/>
        <end position="145"/>
    </location>
    <ligand>
        <name>ATP</name>
        <dbReference type="ChEBI" id="CHEBI:30616"/>
    </ligand>
</feature>
<feature type="binding site" evidence="1">
    <location>
        <position position="189"/>
    </location>
    <ligand>
        <name>D-alanine</name>
        <dbReference type="ChEBI" id="CHEBI:57416"/>
    </ligand>
</feature>
<feature type="binding site" evidence="1">
    <location>
        <begin position="284"/>
        <end position="289"/>
    </location>
    <ligand>
        <name>ATP</name>
        <dbReference type="ChEBI" id="CHEBI:30616"/>
    </ligand>
</feature>
<feature type="binding site" evidence="1">
    <location>
        <position position="293"/>
    </location>
    <ligand>
        <name>D-alanine</name>
        <dbReference type="ChEBI" id="CHEBI:57416"/>
    </ligand>
</feature>
<feature type="binding site" evidence="1">
    <location>
        <position position="365"/>
    </location>
    <ligand>
        <name>ATP</name>
        <dbReference type="ChEBI" id="CHEBI:30616"/>
    </ligand>
</feature>
<feature type="binding site" evidence="1">
    <location>
        <position position="473"/>
    </location>
    <ligand>
        <name>ATP</name>
        <dbReference type="ChEBI" id="CHEBI:30616"/>
    </ligand>
</feature>
<feature type="binding site" evidence="1">
    <location>
        <position position="473"/>
    </location>
    <ligand>
        <name>D-alanine</name>
        <dbReference type="ChEBI" id="CHEBI:57416"/>
    </ligand>
</feature>